<proteinExistence type="inferred from homology"/>
<dbReference type="EC" id="2.6.1.9" evidence="1"/>
<dbReference type="EMBL" id="CP001150">
    <property type="protein sequence ID" value="ACM00467.1"/>
    <property type="molecule type" value="Genomic_DNA"/>
</dbReference>
<dbReference type="RefSeq" id="WP_012643841.1">
    <property type="nucleotide sequence ID" value="NC_011963.1"/>
</dbReference>
<dbReference type="SMR" id="B9KPH4"/>
<dbReference type="GeneID" id="67446057"/>
<dbReference type="KEGG" id="rsk:RSKD131_0607"/>
<dbReference type="HOGENOM" id="CLU_017584_3_3_5"/>
<dbReference type="UniPathway" id="UPA00031">
    <property type="reaction ID" value="UER00012"/>
</dbReference>
<dbReference type="GO" id="GO:0004400">
    <property type="term" value="F:histidinol-phosphate transaminase activity"/>
    <property type="evidence" value="ECO:0007669"/>
    <property type="project" value="UniProtKB-UniRule"/>
</dbReference>
<dbReference type="GO" id="GO:0030170">
    <property type="term" value="F:pyridoxal phosphate binding"/>
    <property type="evidence" value="ECO:0007669"/>
    <property type="project" value="InterPro"/>
</dbReference>
<dbReference type="GO" id="GO:0000105">
    <property type="term" value="P:L-histidine biosynthetic process"/>
    <property type="evidence" value="ECO:0007669"/>
    <property type="project" value="UniProtKB-UniRule"/>
</dbReference>
<dbReference type="CDD" id="cd00609">
    <property type="entry name" value="AAT_like"/>
    <property type="match status" value="1"/>
</dbReference>
<dbReference type="Gene3D" id="3.90.1150.10">
    <property type="entry name" value="Aspartate Aminotransferase, domain 1"/>
    <property type="match status" value="1"/>
</dbReference>
<dbReference type="Gene3D" id="3.40.640.10">
    <property type="entry name" value="Type I PLP-dependent aspartate aminotransferase-like (Major domain)"/>
    <property type="match status" value="1"/>
</dbReference>
<dbReference type="HAMAP" id="MF_01023">
    <property type="entry name" value="HisC_aminotrans_2"/>
    <property type="match status" value="1"/>
</dbReference>
<dbReference type="InterPro" id="IPR004839">
    <property type="entry name" value="Aminotransferase_I/II_large"/>
</dbReference>
<dbReference type="InterPro" id="IPR005861">
    <property type="entry name" value="HisP_aminotrans"/>
</dbReference>
<dbReference type="InterPro" id="IPR050106">
    <property type="entry name" value="HistidinolP_aminotransfase"/>
</dbReference>
<dbReference type="InterPro" id="IPR015424">
    <property type="entry name" value="PyrdxlP-dep_Trfase"/>
</dbReference>
<dbReference type="InterPro" id="IPR015421">
    <property type="entry name" value="PyrdxlP-dep_Trfase_major"/>
</dbReference>
<dbReference type="InterPro" id="IPR015422">
    <property type="entry name" value="PyrdxlP-dep_Trfase_small"/>
</dbReference>
<dbReference type="NCBIfam" id="TIGR01141">
    <property type="entry name" value="hisC"/>
    <property type="match status" value="1"/>
</dbReference>
<dbReference type="PANTHER" id="PTHR43643:SF3">
    <property type="entry name" value="HISTIDINOL-PHOSPHATE AMINOTRANSFERASE"/>
    <property type="match status" value="1"/>
</dbReference>
<dbReference type="PANTHER" id="PTHR43643">
    <property type="entry name" value="HISTIDINOL-PHOSPHATE AMINOTRANSFERASE 2"/>
    <property type="match status" value="1"/>
</dbReference>
<dbReference type="Pfam" id="PF00155">
    <property type="entry name" value="Aminotran_1_2"/>
    <property type="match status" value="1"/>
</dbReference>
<dbReference type="SUPFAM" id="SSF53383">
    <property type="entry name" value="PLP-dependent transferases"/>
    <property type="match status" value="1"/>
</dbReference>
<reference key="1">
    <citation type="journal article" date="2009" name="J. Bacteriol.">
        <title>Complete genome sequence of Rhodobacter sphaeroides KD131.</title>
        <authorList>
            <person name="Lim S.-K."/>
            <person name="Kim S.J."/>
            <person name="Cha S.H."/>
            <person name="Oh Y.-K."/>
            <person name="Rhee H.-J."/>
            <person name="Kim M.-S."/>
            <person name="Lee J.K."/>
        </authorList>
    </citation>
    <scope>NUCLEOTIDE SEQUENCE [LARGE SCALE GENOMIC DNA]</scope>
    <source>
        <strain>KD131 / KCTC 12085</strain>
    </source>
</reference>
<gene>
    <name evidence="1" type="primary">hisC</name>
    <name type="ordered locus">RSKD131_0607</name>
</gene>
<name>HIS8_CERSK</name>
<evidence type="ECO:0000255" key="1">
    <source>
        <dbReference type="HAMAP-Rule" id="MF_01023"/>
    </source>
</evidence>
<keyword id="KW-0028">Amino-acid biosynthesis</keyword>
<keyword id="KW-0032">Aminotransferase</keyword>
<keyword id="KW-0368">Histidine biosynthesis</keyword>
<keyword id="KW-0663">Pyridoxal phosphate</keyword>
<keyword id="KW-0808">Transferase</keyword>
<accession>B9KPH4</accession>
<organism>
    <name type="scientific">Cereibacter sphaeroides (strain KD131 / KCTC 12085)</name>
    <name type="common">Rhodobacter sphaeroides</name>
    <dbReference type="NCBI Taxonomy" id="557760"/>
    <lineage>
        <taxon>Bacteria</taxon>
        <taxon>Pseudomonadati</taxon>
        <taxon>Pseudomonadota</taxon>
        <taxon>Alphaproteobacteria</taxon>
        <taxon>Rhodobacterales</taxon>
        <taxon>Paracoccaceae</taxon>
        <taxon>Cereibacter</taxon>
    </lineage>
</organism>
<feature type="chain" id="PRO_1000149111" description="Histidinol-phosphate aminotransferase">
    <location>
        <begin position="1"/>
        <end position="361"/>
    </location>
</feature>
<feature type="modified residue" description="N6-(pyridoxal phosphate)lysine" evidence="1">
    <location>
        <position position="219"/>
    </location>
</feature>
<comment type="catalytic activity">
    <reaction evidence="1">
        <text>L-histidinol phosphate + 2-oxoglutarate = 3-(imidazol-4-yl)-2-oxopropyl phosphate + L-glutamate</text>
        <dbReference type="Rhea" id="RHEA:23744"/>
        <dbReference type="ChEBI" id="CHEBI:16810"/>
        <dbReference type="ChEBI" id="CHEBI:29985"/>
        <dbReference type="ChEBI" id="CHEBI:57766"/>
        <dbReference type="ChEBI" id="CHEBI:57980"/>
        <dbReference type="EC" id="2.6.1.9"/>
    </reaction>
</comment>
<comment type="cofactor">
    <cofactor evidence="1">
        <name>pyridoxal 5'-phosphate</name>
        <dbReference type="ChEBI" id="CHEBI:597326"/>
    </cofactor>
</comment>
<comment type="pathway">
    <text evidence="1">Amino-acid biosynthesis; L-histidine biosynthesis; L-histidine from 5-phospho-alpha-D-ribose 1-diphosphate: step 7/9.</text>
</comment>
<comment type="subunit">
    <text evidence="1">Homodimer.</text>
</comment>
<comment type="similarity">
    <text evidence="1">Belongs to the class-II pyridoxal-phosphate-dependent aminotransferase family. Histidinol-phosphate aminotransferase subfamily.</text>
</comment>
<sequence>MSDAIRPQPGILDIALYEGGKSHVAGIQNALKLSSNENPFGPSPKAKEAFLRSVHTLHRYPSTDHAGLRHAIAEVHGLDPARVICGVGSDEIITFLCQAYAGPHTDVVFTEHGFLMYRISALAVGANPVEVPERERTTDVDAILAACTPHTRLVFLANPNNPTGTMIGQADLARLAAGLPAQAILVLDGAYAEYVPGYDAGLALIEERGNVVMTRTFSKIYGLGGLRVGWGYGPKSIIDVLNRIRGPFNLSTTQLETAEAAVRDQDHVARCRADNARWRIWLAEALAEIGVPSDTSMANFILARFSDTEEAEACDLHLQTQGLIVRRVAGYKLPHCLRITIGDEASCRRVAHAIGQFKRMR</sequence>
<protein>
    <recommendedName>
        <fullName evidence="1">Histidinol-phosphate aminotransferase</fullName>
        <ecNumber evidence="1">2.6.1.9</ecNumber>
    </recommendedName>
    <alternativeName>
        <fullName evidence="1">Imidazole acetol-phosphate transaminase</fullName>
    </alternativeName>
</protein>